<organism>
    <name type="scientific">Arabidopsis thaliana</name>
    <name type="common">Mouse-ear cress</name>
    <dbReference type="NCBI Taxonomy" id="3702"/>
    <lineage>
        <taxon>Eukaryota</taxon>
        <taxon>Viridiplantae</taxon>
        <taxon>Streptophyta</taxon>
        <taxon>Embryophyta</taxon>
        <taxon>Tracheophyta</taxon>
        <taxon>Spermatophyta</taxon>
        <taxon>Magnoliopsida</taxon>
        <taxon>eudicotyledons</taxon>
        <taxon>Gunneridae</taxon>
        <taxon>Pentapetalae</taxon>
        <taxon>rosids</taxon>
        <taxon>malvids</taxon>
        <taxon>Brassicales</taxon>
        <taxon>Brassicaceae</taxon>
        <taxon>Camelineae</taxon>
        <taxon>Arabidopsis</taxon>
    </lineage>
</organism>
<reference key="1">
    <citation type="journal article" date="1999" name="Nature">
        <title>Sequence and analysis of chromosome 4 of the plant Arabidopsis thaliana.</title>
        <authorList>
            <person name="Mayer K.F.X."/>
            <person name="Schueller C."/>
            <person name="Wambutt R."/>
            <person name="Murphy G."/>
            <person name="Volckaert G."/>
            <person name="Pohl T."/>
            <person name="Duesterhoeft A."/>
            <person name="Stiekema W."/>
            <person name="Entian K.-D."/>
            <person name="Terryn N."/>
            <person name="Harris B."/>
            <person name="Ansorge W."/>
            <person name="Brandt P."/>
            <person name="Grivell L.A."/>
            <person name="Rieger M."/>
            <person name="Weichselgartner M."/>
            <person name="de Simone V."/>
            <person name="Obermaier B."/>
            <person name="Mache R."/>
            <person name="Mueller M."/>
            <person name="Kreis M."/>
            <person name="Delseny M."/>
            <person name="Puigdomenech P."/>
            <person name="Watson M."/>
            <person name="Schmidtheini T."/>
            <person name="Reichert B."/>
            <person name="Portetelle D."/>
            <person name="Perez-Alonso M."/>
            <person name="Boutry M."/>
            <person name="Bancroft I."/>
            <person name="Vos P."/>
            <person name="Hoheisel J."/>
            <person name="Zimmermann W."/>
            <person name="Wedler H."/>
            <person name="Ridley P."/>
            <person name="Langham S.-A."/>
            <person name="McCullagh B."/>
            <person name="Bilham L."/>
            <person name="Robben J."/>
            <person name="van der Schueren J."/>
            <person name="Grymonprez B."/>
            <person name="Chuang Y.-J."/>
            <person name="Vandenbussche F."/>
            <person name="Braeken M."/>
            <person name="Weltjens I."/>
            <person name="Voet M."/>
            <person name="Bastiaens I."/>
            <person name="Aert R."/>
            <person name="Defoor E."/>
            <person name="Weitzenegger T."/>
            <person name="Bothe G."/>
            <person name="Ramsperger U."/>
            <person name="Hilbert H."/>
            <person name="Braun M."/>
            <person name="Holzer E."/>
            <person name="Brandt A."/>
            <person name="Peters S."/>
            <person name="van Staveren M."/>
            <person name="Dirkse W."/>
            <person name="Mooijman P."/>
            <person name="Klein Lankhorst R."/>
            <person name="Rose M."/>
            <person name="Hauf J."/>
            <person name="Koetter P."/>
            <person name="Berneiser S."/>
            <person name="Hempel S."/>
            <person name="Feldpausch M."/>
            <person name="Lamberth S."/>
            <person name="Van den Daele H."/>
            <person name="De Keyser A."/>
            <person name="Buysshaert C."/>
            <person name="Gielen J."/>
            <person name="Villarroel R."/>
            <person name="De Clercq R."/>
            <person name="van Montagu M."/>
            <person name="Rogers J."/>
            <person name="Cronin A."/>
            <person name="Quail M.A."/>
            <person name="Bray-Allen S."/>
            <person name="Clark L."/>
            <person name="Doggett J."/>
            <person name="Hall S."/>
            <person name="Kay M."/>
            <person name="Lennard N."/>
            <person name="McLay K."/>
            <person name="Mayes R."/>
            <person name="Pettett A."/>
            <person name="Rajandream M.A."/>
            <person name="Lyne M."/>
            <person name="Benes V."/>
            <person name="Rechmann S."/>
            <person name="Borkova D."/>
            <person name="Bloecker H."/>
            <person name="Scharfe M."/>
            <person name="Grimm M."/>
            <person name="Loehnert T.-H."/>
            <person name="Dose S."/>
            <person name="de Haan M."/>
            <person name="Maarse A.C."/>
            <person name="Schaefer M."/>
            <person name="Mueller-Auer S."/>
            <person name="Gabel C."/>
            <person name="Fuchs M."/>
            <person name="Fartmann B."/>
            <person name="Granderath K."/>
            <person name="Dauner D."/>
            <person name="Herzl A."/>
            <person name="Neumann S."/>
            <person name="Argiriou A."/>
            <person name="Vitale D."/>
            <person name="Liguori R."/>
            <person name="Piravandi E."/>
            <person name="Massenet O."/>
            <person name="Quigley F."/>
            <person name="Clabauld G."/>
            <person name="Muendlein A."/>
            <person name="Felber R."/>
            <person name="Schnabl S."/>
            <person name="Hiller R."/>
            <person name="Schmidt W."/>
            <person name="Lecharny A."/>
            <person name="Aubourg S."/>
            <person name="Chefdor F."/>
            <person name="Cooke R."/>
            <person name="Berger C."/>
            <person name="Monfort A."/>
            <person name="Casacuberta E."/>
            <person name="Gibbons T."/>
            <person name="Weber N."/>
            <person name="Vandenbol M."/>
            <person name="Bargues M."/>
            <person name="Terol J."/>
            <person name="Torres A."/>
            <person name="Perez-Perez A."/>
            <person name="Purnelle B."/>
            <person name="Bent E."/>
            <person name="Johnson S."/>
            <person name="Tacon D."/>
            <person name="Jesse T."/>
            <person name="Heijnen L."/>
            <person name="Schwarz S."/>
            <person name="Scholler P."/>
            <person name="Heber S."/>
            <person name="Francs P."/>
            <person name="Bielke C."/>
            <person name="Frishman D."/>
            <person name="Haase D."/>
            <person name="Lemcke K."/>
            <person name="Mewes H.-W."/>
            <person name="Stocker S."/>
            <person name="Zaccaria P."/>
            <person name="Bevan M."/>
            <person name="Wilson R.K."/>
            <person name="de la Bastide M."/>
            <person name="Habermann K."/>
            <person name="Parnell L."/>
            <person name="Dedhia N."/>
            <person name="Gnoj L."/>
            <person name="Schutz K."/>
            <person name="Huang E."/>
            <person name="Spiegel L."/>
            <person name="Sekhon M."/>
            <person name="Murray J."/>
            <person name="Sheet P."/>
            <person name="Cordes M."/>
            <person name="Abu-Threideh J."/>
            <person name="Stoneking T."/>
            <person name="Kalicki J."/>
            <person name="Graves T."/>
            <person name="Harmon G."/>
            <person name="Edwards J."/>
            <person name="Latreille P."/>
            <person name="Courtney L."/>
            <person name="Cloud J."/>
            <person name="Abbott A."/>
            <person name="Scott K."/>
            <person name="Johnson D."/>
            <person name="Minx P."/>
            <person name="Bentley D."/>
            <person name="Fulton B."/>
            <person name="Miller N."/>
            <person name="Greco T."/>
            <person name="Kemp K."/>
            <person name="Kramer J."/>
            <person name="Fulton L."/>
            <person name="Mardis E."/>
            <person name="Dante M."/>
            <person name="Pepin K."/>
            <person name="Hillier L.W."/>
            <person name="Nelson J."/>
            <person name="Spieth J."/>
            <person name="Ryan E."/>
            <person name="Andrews S."/>
            <person name="Geisel C."/>
            <person name="Layman D."/>
            <person name="Du H."/>
            <person name="Ali J."/>
            <person name="Berghoff A."/>
            <person name="Jones K."/>
            <person name="Drone K."/>
            <person name="Cotton M."/>
            <person name="Joshu C."/>
            <person name="Antonoiu B."/>
            <person name="Zidanic M."/>
            <person name="Strong C."/>
            <person name="Sun H."/>
            <person name="Lamar B."/>
            <person name="Yordan C."/>
            <person name="Ma P."/>
            <person name="Zhong J."/>
            <person name="Preston R."/>
            <person name="Vil D."/>
            <person name="Shekher M."/>
            <person name="Matero A."/>
            <person name="Shah R."/>
            <person name="Swaby I.K."/>
            <person name="O'Shaughnessy A."/>
            <person name="Rodriguez M."/>
            <person name="Hoffman J."/>
            <person name="Till S."/>
            <person name="Granat S."/>
            <person name="Shohdy N."/>
            <person name="Hasegawa A."/>
            <person name="Hameed A."/>
            <person name="Lodhi M."/>
            <person name="Johnson A."/>
            <person name="Chen E."/>
            <person name="Marra M.A."/>
            <person name="Martienssen R."/>
            <person name="McCombie W.R."/>
        </authorList>
    </citation>
    <scope>NUCLEOTIDE SEQUENCE [LARGE SCALE GENOMIC DNA]</scope>
    <source>
        <strain>cv. Columbia</strain>
    </source>
</reference>
<reference key="2">
    <citation type="journal article" date="2017" name="Plant J.">
        <title>Araport11: a complete reannotation of the Arabidopsis thaliana reference genome.</title>
        <authorList>
            <person name="Cheng C.Y."/>
            <person name="Krishnakumar V."/>
            <person name="Chan A.P."/>
            <person name="Thibaud-Nissen F."/>
            <person name="Schobel S."/>
            <person name="Town C.D."/>
        </authorList>
    </citation>
    <scope>GENOME REANNOTATION</scope>
    <source>
        <strain>cv. Columbia</strain>
    </source>
</reference>
<reference key="3">
    <citation type="journal article" date="2001" name="Plant Physiol.">
        <title>A superfamily of proteins with novel cysteine-rich repeats.</title>
        <authorList>
            <person name="Chen Z."/>
        </authorList>
    </citation>
    <scope>GENE FAMILY ORGANIZATION</scope>
    <scope>NOMENCLATURE</scope>
</reference>
<comment type="catalytic activity">
    <reaction>
        <text>L-seryl-[protein] + ATP = O-phospho-L-seryl-[protein] + ADP + H(+)</text>
        <dbReference type="Rhea" id="RHEA:17989"/>
        <dbReference type="Rhea" id="RHEA-COMP:9863"/>
        <dbReference type="Rhea" id="RHEA-COMP:11604"/>
        <dbReference type="ChEBI" id="CHEBI:15378"/>
        <dbReference type="ChEBI" id="CHEBI:29999"/>
        <dbReference type="ChEBI" id="CHEBI:30616"/>
        <dbReference type="ChEBI" id="CHEBI:83421"/>
        <dbReference type="ChEBI" id="CHEBI:456216"/>
    </reaction>
</comment>
<comment type="catalytic activity">
    <reaction>
        <text>L-threonyl-[protein] + ATP = O-phospho-L-threonyl-[protein] + ADP + H(+)</text>
        <dbReference type="Rhea" id="RHEA:46608"/>
        <dbReference type="Rhea" id="RHEA-COMP:11060"/>
        <dbReference type="Rhea" id="RHEA-COMP:11605"/>
        <dbReference type="ChEBI" id="CHEBI:15378"/>
        <dbReference type="ChEBI" id="CHEBI:30013"/>
        <dbReference type="ChEBI" id="CHEBI:30616"/>
        <dbReference type="ChEBI" id="CHEBI:61977"/>
        <dbReference type="ChEBI" id="CHEBI:456216"/>
    </reaction>
</comment>
<comment type="subcellular location">
    <subcellularLocation>
        <location evidence="6">Membrane</location>
        <topology evidence="6">Single-pass membrane protein</topology>
    </subcellularLocation>
</comment>
<comment type="similarity">
    <text evidence="3">Belongs to the protein kinase superfamily. Ser/Thr protein kinase family. CRK subfamily.</text>
</comment>
<comment type="sequence caution" evidence="6">
    <conflict type="erroneous gene model prediction">
        <sequence resource="EMBL-CDS" id="CAA17542"/>
    </conflict>
</comment>
<comment type="sequence caution" evidence="6">
    <conflict type="erroneous gene model prediction">
        <sequence resource="EMBL-CDS" id="CAB79123"/>
    </conflict>
</comment>
<proteinExistence type="inferred from homology"/>
<accession>O49564</accession>
<sequence>MASTSIMLSSFFSFFFLTFFVTYAQQNVTVHTICYYDGGNFTSNTSYSLNLNRLISSLPDLTPTINGFYNISINGEVNAIALCRGDVKPNQDCISCITTAAKQLVESCPNIIEANIWLEKCMFRYTSRIILGQMEPVPFSYTSSNVSVTDKEGFSKGLGDLLDSLGAKIDAANETKEVKFAAGVKGTIYALAQCTPDLSESDCRICLAQIFAGVPTCCDGKTGGWWTNPSCYFRFEVYPFFDLSVTSEQKQPLSSHNNNTRRSDQGKSKDRSKTLIFAVVPIVAIILGLVFLFIYLKRRRKKKTLKENAENEFESTDSLHFDFETIRVATDDFSLTNKIGEGGFGVVYKGHLPDGLEIAVKRLSIHSGQGNAEFKTEVLLMTKLQHKNLVKLFGFSIKESERLLVYEFIPNTSLDRFLFDPIKQKQLDWEKRYNIIVGVSRGLLYLHEGSEFPIIHRDLKSSNVLLDEQMLPKISDFGMARQFDFDNTQAVTRRVVGTYGYMAPEYAMHGRFSVKTDVYSFGVLVLEIITGKRNSGLGLGEGTDLPTFAWQNWIEGTSMELIDPVLLQTHDKKESMQCLEIALSCVQENPTKRPTMDSVVSMLSSDSESRQLPKPSQPGFFRRSASFSISLNDVSLTDLSAR</sequence>
<evidence type="ECO:0000250" key="1">
    <source>
        <dbReference type="UniProtKB" id="O48814"/>
    </source>
</evidence>
<evidence type="ECO:0000255" key="2"/>
<evidence type="ECO:0000255" key="3">
    <source>
        <dbReference type="PROSITE-ProRule" id="PRU00159"/>
    </source>
</evidence>
<evidence type="ECO:0000255" key="4">
    <source>
        <dbReference type="PROSITE-ProRule" id="PRU00806"/>
    </source>
</evidence>
<evidence type="ECO:0000255" key="5">
    <source>
        <dbReference type="PROSITE-ProRule" id="PRU10027"/>
    </source>
</evidence>
<evidence type="ECO:0000305" key="6"/>
<keyword id="KW-0067">ATP-binding</keyword>
<keyword id="KW-0325">Glycoprotein</keyword>
<keyword id="KW-0418">Kinase</keyword>
<keyword id="KW-0472">Membrane</keyword>
<keyword id="KW-0547">Nucleotide-binding</keyword>
<keyword id="KW-0597">Phosphoprotein</keyword>
<keyword id="KW-0675">Receptor</keyword>
<keyword id="KW-1185">Reference proteome</keyword>
<keyword id="KW-0677">Repeat</keyword>
<keyword id="KW-0723">Serine/threonine-protein kinase</keyword>
<keyword id="KW-0732">Signal</keyword>
<keyword id="KW-0808">Transferase</keyword>
<keyword id="KW-0812">Transmembrane</keyword>
<keyword id="KW-1133">Transmembrane helix</keyword>
<gene>
    <name type="primary">CRK27</name>
    <name type="ordered locus">At4g21230</name>
    <name type="ORF">F7J7.170</name>
</gene>
<dbReference type="EC" id="2.7.11.-"/>
<dbReference type="EMBL" id="AL021960">
    <property type="protein sequence ID" value="CAA17542.1"/>
    <property type="status" value="ALT_SEQ"/>
    <property type="molecule type" value="Genomic_DNA"/>
</dbReference>
<dbReference type="EMBL" id="AL161554">
    <property type="protein sequence ID" value="CAB79123.1"/>
    <property type="status" value="ALT_SEQ"/>
    <property type="molecule type" value="Genomic_DNA"/>
</dbReference>
<dbReference type="EMBL" id="CP002687">
    <property type="protein sequence ID" value="AEE84430.1"/>
    <property type="molecule type" value="Genomic_DNA"/>
</dbReference>
<dbReference type="PIR" id="T04954">
    <property type="entry name" value="T04954"/>
</dbReference>
<dbReference type="RefSeq" id="NP_193855.2">
    <property type="nucleotide sequence ID" value="NM_118242.4"/>
</dbReference>
<dbReference type="SMR" id="O49564"/>
<dbReference type="FunCoup" id="O49564">
    <property type="interactions" value="53"/>
</dbReference>
<dbReference type="STRING" id="3702.O49564"/>
<dbReference type="GlyCosmos" id="O49564">
    <property type="glycosylation" value="7 sites, No reported glycans"/>
</dbReference>
<dbReference type="GlyGen" id="O49564">
    <property type="glycosylation" value="7 sites"/>
</dbReference>
<dbReference type="PaxDb" id="3702-AT4G21230.1"/>
<dbReference type="ProteomicsDB" id="220491"/>
<dbReference type="EnsemblPlants" id="AT4G21230.1">
    <property type="protein sequence ID" value="AT4G21230.1"/>
    <property type="gene ID" value="AT4G21230"/>
</dbReference>
<dbReference type="GeneID" id="827872"/>
<dbReference type="Gramene" id="AT4G21230.1">
    <property type="protein sequence ID" value="AT4G21230.1"/>
    <property type="gene ID" value="AT4G21230"/>
</dbReference>
<dbReference type="KEGG" id="ath:AT4G21230"/>
<dbReference type="Araport" id="AT4G21230"/>
<dbReference type="TAIR" id="AT4G21230">
    <property type="gene designation" value="CRK27"/>
</dbReference>
<dbReference type="eggNOG" id="ENOG502QWDY">
    <property type="taxonomic scope" value="Eukaryota"/>
</dbReference>
<dbReference type="HOGENOM" id="CLU_000288_35_2_1"/>
<dbReference type="InParanoid" id="O49564"/>
<dbReference type="OMA" id="RICLAQI"/>
<dbReference type="PhylomeDB" id="O49564"/>
<dbReference type="PRO" id="PR:O49564"/>
<dbReference type="Proteomes" id="UP000006548">
    <property type="component" value="Chromosome 4"/>
</dbReference>
<dbReference type="ExpressionAtlas" id="O49564">
    <property type="expression patterns" value="baseline and differential"/>
</dbReference>
<dbReference type="GO" id="GO:0016020">
    <property type="term" value="C:membrane"/>
    <property type="evidence" value="ECO:0007669"/>
    <property type="project" value="UniProtKB-SubCell"/>
</dbReference>
<dbReference type="GO" id="GO:0005524">
    <property type="term" value="F:ATP binding"/>
    <property type="evidence" value="ECO:0007669"/>
    <property type="project" value="UniProtKB-KW"/>
</dbReference>
<dbReference type="GO" id="GO:0106310">
    <property type="term" value="F:protein serine kinase activity"/>
    <property type="evidence" value="ECO:0007669"/>
    <property type="project" value="RHEA"/>
</dbReference>
<dbReference type="GO" id="GO:0004674">
    <property type="term" value="F:protein serine/threonine kinase activity"/>
    <property type="evidence" value="ECO:0007669"/>
    <property type="project" value="UniProtKB-KW"/>
</dbReference>
<dbReference type="CDD" id="cd23509">
    <property type="entry name" value="Gnk2-like"/>
    <property type="match status" value="2"/>
</dbReference>
<dbReference type="CDD" id="cd14066">
    <property type="entry name" value="STKc_IRAK"/>
    <property type="match status" value="1"/>
</dbReference>
<dbReference type="FunFam" id="3.30.200.20:FF:000142">
    <property type="entry name" value="Cysteine-rich receptor-like protein kinase 10"/>
    <property type="match status" value="1"/>
</dbReference>
<dbReference type="FunFam" id="1.10.510.10:FF:000343">
    <property type="entry name" value="Cysteine-rich receptor-like protein kinase 28"/>
    <property type="match status" value="1"/>
</dbReference>
<dbReference type="FunFam" id="3.30.430.20:FF:000009">
    <property type="entry name" value="Cysteine-rich receptor-like protein kinase 28"/>
    <property type="match status" value="1"/>
</dbReference>
<dbReference type="Gene3D" id="3.30.430.20">
    <property type="entry name" value="Gnk2 domain, C-X8-C-X2-C motif"/>
    <property type="match status" value="2"/>
</dbReference>
<dbReference type="Gene3D" id="3.30.200.20">
    <property type="entry name" value="Phosphorylase Kinase, domain 1"/>
    <property type="match status" value="1"/>
</dbReference>
<dbReference type="Gene3D" id="1.10.510.10">
    <property type="entry name" value="Transferase(Phosphotransferase) domain 1"/>
    <property type="match status" value="1"/>
</dbReference>
<dbReference type="InterPro" id="IPR002902">
    <property type="entry name" value="GNK2"/>
</dbReference>
<dbReference type="InterPro" id="IPR038408">
    <property type="entry name" value="GNK2_sf"/>
</dbReference>
<dbReference type="InterPro" id="IPR011009">
    <property type="entry name" value="Kinase-like_dom_sf"/>
</dbReference>
<dbReference type="InterPro" id="IPR000719">
    <property type="entry name" value="Prot_kinase_dom"/>
</dbReference>
<dbReference type="InterPro" id="IPR017441">
    <property type="entry name" value="Protein_kinase_ATP_BS"/>
</dbReference>
<dbReference type="InterPro" id="IPR001245">
    <property type="entry name" value="Ser-Thr/Tyr_kinase_cat_dom"/>
</dbReference>
<dbReference type="InterPro" id="IPR008271">
    <property type="entry name" value="Ser/Thr_kinase_AS"/>
</dbReference>
<dbReference type="PANTHER" id="PTHR27002:SF1104">
    <property type="entry name" value="CYSTEINE-RICH RECEPTOR-LIKE PROTEIN KINASE 27-RELATED"/>
    <property type="match status" value="1"/>
</dbReference>
<dbReference type="PANTHER" id="PTHR27002">
    <property type="entry name" value="RECEPTOR-LIKE SERINE/THREONINE-PROTEIN KINASE SD1-8"/>
    <property type="match status" value="1"/>
</dbReference>
<dbReference type="Pfam" id="PF07714">
    <property type="entry name" value="PK_Tyr_Ser-Thr"/>
    <property type="match status" value="1"/>
</dbReference>
<dbReference type="Pfam" id="PF01657">
    <property type="entry name" value="Stress-antifung"/>
    <property type="match status" value="2"/>
</dbReference>
<dbReference type="SMART" id="SM00220">
    <property type="entry name" value="S_TKc"/>
    <property type="match status" value="1"/>
</dbReference>
<dbReference type="SUPFAM" id="SSF56112">
    <property type="entry name" value="Protein kinase-like (PK-like)"/>
    <property type="match status" value="1"/>
</dbReference>
<dbReference type="PROSITE" id="PS51473">
    <property type="entry name" value="GNK2"/>
    <property type="match status" value="2"/>
</dbReference>
<dbReference type="PROSITE" id="PS00107">
    <property type="entry name" value="PROTEIN_KINASE_ATP"/>
    <property type="match status" value="1"/>
</dbReference>
<dbReference type="PROSITE" id="PS50011">
    <property type="entry name" value="PROTEIN_KINASE_DOM"/>
    <property type="match status" value="1"/>
</dbReference>
<dbReference type="PROSITE" id="PS00108">
    <property type="entry name" value="PROTEIN_KINASE_ST"/>
    <property type="match status" value="1"/>
</dbReference>
<protein>
    <recommendedName>
        <fullName>Cysteine-rich receptor-like protein kinase 27</fullName>
        <shortName>Cysteine-rich RLK27</shortName>
        <ecNumber>2.7.11.-</ecNumber>
    </recommendedName>
</protein>
<name>CRK27_ARATH</name>
<feature type="signal peptide" evidence="2">
    <location>
        <begin position="1"/>
        <end position="24"/>
    </location>
</feature>
<feature type="chain" id="PRO_0000295074" description="Cysteine-rich receptor-like protein kinase 27">
    <location>
        <begin position="25"/>
        <end position="642"/>
    </location>
</feature>
<feature type="topological domain" description="Extracellular" evidence="2">
    <location>
        <begin position="25"/>
        <end position="274"/>
    </location>
</feature>
<feature type="transmembrane region" description="Helical" evidence="2">
    <location>
        <begin position="275"/>
        <end position="295"/>
    </location>
</feature>
<feature type="topological domain" description="Cytoplasmic" evidence="2">
    <location>
        <begin position="296"/>
        <end position="642"/>
    </location>
</feature>
<feature type="domain" description="Gnk2-homologous 1" evidence="4">
    <location>
        <begin position="29"/>
        <end position="130"/>
    </location>
</feature>
<feature type="domain" description="Gnk2-homologous 2" evidence="4">
    <location>
        <begin position="136"/>
        <end position="240"/>
    </location>
</feature>
<feature type="domain" description="Protein kinase" evidence="3">
    <location>
        <begin position="333"/>
        <end position="620"/>
    </location>
</feature>
<feature type="active site" description="Proton acceptor" evidence="3 5">
    <location>
        <position position="458"/>
    </location>
</feature>
<feature type="binding site" evidence="3">
    <location>
        <begin position="339"/>
        <end position="347"/>
    </location>
    <ligand>
        <name>ATP</name>
        <dbReference type="ChEBI" id="CHEBI:30616"/>
    </ligand>
</feature>
<feature type="binding site" evidence="3">
    <location>
        <position position="361"/>
    </location>
    <ligand>
        <name>ATP</name>
        <dbReference type="ChEBI" id="CHEBI:30616"/>
    </ligand>
</feature>
<feature type="modified residue" description="Phosphotyrosine" evidence="1">
    <location>
        <position position="406"/>
    </location>
</feature>
<feature type="modified residue" description="Phosphoserine" evidence="1">
    <location>
        <position position="462"/>
    </location>
</feature>
<feature type="modified residue" description="Phosphothreonine" evidence="1">
    <location>
        <position position="498"/>
    </location>
</feature>
<feature type="modified residue" description="Phosphotyrosine" evidence="1">
    <location>
        <position position="506"/>
    </location>
</feature>
<feature type="glycosylation site" description="N-linked (GlcNAc...) asparagine" evidence="2">
    <location>
        <position position="27"/>
    </location>
</feature>
<feature type="glycosylation site" description="N-linked (GlcNAc...) asparagine" evidence="2">
    <location>
        <position position="40"/>
    </location>
</feature>
<feature type="glycosylation site" description="N-linked (GlcNAc...) asparagine" evidence="2">
    <location>
        <position position="44"/>
    </location>
</feature>
<feature type="glycosylation site" description="N-linked (GlcNAc...) asparagine" evidence="2">
    <location>
        <position position="70"/>
    </location>
</feature>
<feature type="glycosylation site" description="N-linked (GlcNAc...) asparagine" evidence="2">
    <location>
        <position position="145"/>
    </location>
</feature>
<feature type="glycosylation site" description="N-linked (GlcNAc...) asparagine" evidence="2">
    <location>
        <position position="173"/>
    </location>
</feature>
<feature type="glycosylation site" description="N-linked (GlcNAc...) asparagine" evidence="2">
    <location>
        <position position="258"/>
    </location>
</feature>